<keyword id="KW-0472">Membrane</keyword>
<keyword id="KW-0812">Transmembrane</keyword>
<keyword id="KW-1133">Transmembrane helix</keyword>
<dbReference type="EMBL" id="KJ412288">
    <property type="protein sequence ID" value="AHX39331.1"/>
    <property type="molecule type" value="Genomic_DNA"/>
</dbReference>
<dbReference type="PIR" id="S69857">
    <property type="entry name" value="S69857"/>
</dbReference>
<dbReference type="PaxDb" id="4932-YML047W-A"/>
<dbReference type="EnsemblFungi" id="YML047W-A_mRNA">
    <property type="protein sequence ID" value="YML047W-A"/>
    <property type="gene ID" value="YML047W-A"/>
</dbReference>
<dbReference type="AGR" id="SGD:S000004512"/>
<dbReference type="SGD" id="S000004512">
    <property type="gene designation" value="YML047W-A"/>
</dbReference>
<dbReference type="HOGENOM" id="CLU_2039891_0_0_1"/>
<dbReference type="GO" id="GO:0016020">
    <property type="term" value="C:membrane"/>
    <property type="evidence" value="ECO:0007669"/>
    <property type="project" value="UniProtKB-SubCell"/>
</dbReference>
<organism>
    <name type="scientific">Saccharomyces cerevisiae (strain ATCC 204508 / S288c)</name>
    <name type="common">Baker's yeast</name>
    <dbReference type="NCBI Taxonomy" id="559292"/>
    <lineage>
        <taxon>Eukaryota</taxon>
        <taxon>Fungi</taxon>
        <taxon>Dikarya</taxon>
        <taxon>Ascomycota</taxon>
        <taxon>Saccharomycotina</taxon>
        <taxon>Saccharomycetes</taxon>
        <taxon>Saccharomycetales</taxon>
        <taxon>Saccharomycetaceae</taxon>
        <taxon>Saccharomyces</taxon>
    </lineage>
</organism>
<accession>A0A023PZG9</accession>
<comment type="subcellular location">
    <subcellularLocation>
        <location evidence="1">Membrane</location>
        <topology evidence="1">Multi-pass membrane protein</topology>
    </subcellularLocation>
</comment>
<comment type="miscellaneous">
    <text evidence="2">Partially overlaps PRM6.</text>
</comment>
<comment type="caution">
    <text evidence="3">Product of a dubious gene prediction unlikely to encode a functional protein. Because of that it is not part of the S.cerevisiae S288c complete/reference proteome set.</text>
</comment>
<name>YM047_YEAST</name>
<feature type="chain" id="PRO_0000431059" description="Putative uncharacterized membrane protein YML047W-A">
    <location>
        <begin position="1"/>
        <end position="121"/>
    </location>
</feature>
<feature type="transmembrane region" description="Helical; Name=1" evidence="1">
    <location>
        <begin position="2"/>
        <end position="22"/>
    </location>
</feature>
<feature type="transmembrane region" description="Helical; Name=2" evidence="1">
    <location>
        <begin position="42"/>
        <end position="62"/>
    </location>
</feature>
<feature type="transmembrane region" description="Helical; Name=3" evidence="1">
    <location>
        <begin position="89"/>
        <end position="109"/>
    </location>
</feature>
<sequence>MVFVTIIIIINISYNIYNIYTINENRFTFNAFLQSKKASFTFICIYVCISGGNMPLWAYILFRTFLHPSSSSNSVLCFRRHNQDYHNRIFFAFCCHHIWSLLPHHLSIFPIRRQFYLNSRQ</sequence>
<evidence type="ECO:0000255" key="1"/>
<evidence type="ECO:0000305" key="2"/>
<evidence type="ECO:0000305" key="3">
    <source>
    </source>
</evidence>
<evidence type="ECO:0000312" key="4">
    <source>
        <dbReference type="SGD" id="S000004512"/>
    </source>
</evidence>
<gene>
    <name evidence="4" type="ordered locus">YML047W-A</name>
</gene>
<reference key="1">
    <citation type="journal article" date="1997" name="Nature">
        <title>The nucleotide sequence of Saccharomyces cerevisiae chromosome XIII.</title>
        <authorList>
            <person name="Bowman S."/>
            <person name="Churcher C.M."/>
            <person name="Badcock K."/>
            <person name="Brown D."/>
            <person name="Chillingworth T."/>
            <person name="Connor R."/>
            <person name="Dedman K."/>
            <person name="Devlin K."/>
            <person name="Gentles S."/>
            <person name="Hamlin N."/>
            <person name="Hunt S."/>
            <person name="Jagels K."/>
            <person name="Lye G."/>
            <person name="Moule S."/>
            <person name="Odell C."/>
            <person name="Pearson D."/>
            <person name="Rajandream M.A."/>
            <person name="Rice P."/>
            <person name="Skelton J."/>
            <person name="Walsh S.V."/>
            <person name="Whitehead S."/>
            <person name="Barrell B.G."/>
        </authorList>
    </citation>
    <scope>NUCLEOTIDE SEQUENCE [LARGE SCALE GENOMIC DNA]</scope>
    <source>
        <strain>ATCC 204508 / S288c</strain>
    </source>
</reference>
<reference key="2">
    <citation type="journal article" date="2014" name="G3 (Bethesda)">
        <title>The reference genome sequence of Saccharomyces cerevisiae: Then and now.</title>
        <authorList>
            <person name="Engel S.R."/>
            <person name="Dietrich F.S."/>
            <person name="Fisk D.G."/>
            <person name="Binkley G."/>
            <person name="Balakrishnan R."/>
            <person name="Costanzo M.C."/>
            <person name="Dwight S.S."/>
            <person name="Hitz B.C."/>
            <person name="Karra K."/>
            <person name="Nash R.S."/>
            <person name="Weng S."/>
            <person name="Wong E.D."/>
            <person name="Lloyd P."/>
            <person name="Skrzypek M.S."/>
            <person name="Miyasato S.R."/>
            <person name="Simison M."/>
            <person name="Cherry J.M."/>
        </authorList>
    </citation>
    <scope>GENOME REANNOTATION</scope>
    <source>
        <strain>ATCC 204508 / S288c</strain>
    </source>
</reference>
<protein>
    <recommendedName>
        <fullName evidence="2">Putative uncharacterized membrane protein YML047W-A</fullName>
    </recommendedName>
</protein>
<proteinExistence type="uncertain"/>